<protein>
    <recommendedName>
        <fullName evidence="4">Acetyltransferase PA2578</fullName>
        <ecNumber>2.3.1.-</ecNumber>
    </recommendedName>
    <alternativeName>
        <fullName evidence="4">GCN5-related N-acetyltransferase</fullName>
        <shortName evidence="4">GNAT</shortName>
    </alternativeName>
</protein>
<accession>Q9I0Q8</accession>
<reference key="1">
    <citation type="journal article" date="2000" name="Nature">
        <title>Complete genome sequence of Pseudomonas aeruginosa PAO1, an opportunistic pathogen.</title>
        <authorList>
            <person name="Stover C.K."/>
            <person name="Pham X.-Q.T."/>
            <person name="Erwin A.L."/>
            <person name="Mizoguchi S.D."/>
            <person name="Warrener P."/>
            <person name="Hickey M.J."/>
            <person name="Brinkman F.S.L."/>
            <person name="Hufnagle W.O."/>
            <person name="Kowalik D.J."/>
            <person name="Lagrou M."/>
            <person name="Garber R.L."/>
            <person name="Goltry L."/>
            <person name="Tolentino E."/>
            <person name="Westbrock-Wadman S."/>
            <person name="Yuan Y."/>
            <person name="Brody L.L."/>
            <person name="Coulter S.N."/>
            <person name="Folger K.R."/>
            <person name="Kas A."/>
            <person name="Larbig K."/>
            <person name="Lim R.M."/>
            <person name="Smith K.A."/>
            <person name="Spencer D.H."/>
            <person name="Wong G.K.-S."/>
            <person name="Wu Z."/>
            <person name="Paulsen I.T."/>
            <person name="Reizer J."/>
            <person name="Saier M.H. Jr."/>
            <person name="Hancock R.E.W."/>
            <person name="Lory S."/>
            <person name="Olson M.V."/>
        </authorList>
    </citation>
    <scope>NUCLEOTIDE SEQUENCE [LARGE SCALE GENOMIC DNA]</scope>
    <source>
        <strain>ATCC 15692 / DSM 22644 / CIP 104116 / JCM 14847 / LMG 12228 / 1C / PRS 101 / PAO1</strain>
    </source>
</reference>
<reference key="2">
    <citation type="journal article" date="2013" name="Protein Sci.">
        <title>Broad-substrate screen as a tool to identify substrates for bacterial Gcn5-related N-acetyltransferases with unknown substrate specificity.</title>
        <authorList>
            <person name="Kuhn M.L."/>
            <person name="Majorek K.A."/>
            <person name="Minor W."/>
            <person name="Anderson W.F."/>
        </authorList>
    </citation>
    <scope>FUNCTION</scope>
    <scope>SUBSTRATE SPECIFICITY</scope>
    <source>
        <strain>ATCC 15692 / DSM 22644 / CIP 104116 / JCM 14847 / LMG 12228 / 1C / PRS 101 / PAO1</strain>
    </source>
</reference>
<reference key="3">
    <citation type="submission" date="2010-09" db="PDB data bank">
        <title>Crystal structure of GNAT superfamily protein PA2578 from Pseudomonas aeruginosa.</title>
        <authorList>
            <consortium name="Midwest center for structural genomics (MCSG)"/>
        </authorList>
    </citation>
    <scope>X-RAY CRYSTALLOGRAPHY (1.90 ANGSTROMS) IN COMPLEX WITH COENZYME A</scope>
    <scope>SUBUNIT</scope>
    <source>
        <strain>ATCC 15692 / DSM 22644 / CIP 104116 / JCM 14847 / LMG 12228 / 1C / PRS 101 / PAO1</strain>
    </source>
</reference>
<dbReference type="EC" id="2.3.1.-"/>
<dbReference type="EMBL" id="AE004091">
    <property type="protein sequence ID" value="AAG05966.1"/>
    <property type="molecule type" value="Genomic_DNA"/>
</dbReference>
<dbReference type="PIR" id="D83323">
    <property type="entry name" value="D83323"/>
</dbReference>
<dbReference type="RefSeq" id="NP_251268.1">
    <property type="nucleotide sequence ID" value="NC_002516.2"/>
</dbReference>
<dbReference type="RefSeq" id="WP_003115331.1">
    <property type="nucleotide sequence ID" value="NZ_QZGE01000008.1"/>
</dbReference>
<dbReference type="PDB" id="3OWC">
    <property type="method" value="X-ray"/>
    <property type="resolution" value="1.90 A"/>
    <property type="chains" value="A/B=1-186"/>
</dbReference>
<dbReference type="PDBsum" id="3OWC"/>
<dbReference type="SMR" id="Q9I0Q8"/>
<dbReference type="STRING" id="208964.PA2578"/>
<dbReference type="PaxDb" id="208964-PA2578"/>
<dbReference type="DNASU" id="880009"/>
<dbReference type="GeneID" id="880009"/>
<dbReference type="KEGG" id="pae:PA2578"/>
<dbReference type="PATRIC" id="fig|208964.12.peg.2698"/>
<dbReference type="PseudoCAP" id="PA2578"/>
<dbReference type="HOGENOM" id="CLU_013985_3_2_6"/>
<dbReference type="InParanoid" id="Q9I0Q8"/>
<dbReference type="OrthoDB" id="9801669at2"/>
<dbReference type="PhylomeDB" id="Q9I0Q8"/>
<dbReference type="BioCyc" id="PAER208964:G1FZ6-2615-MONOMER"/>
<dbReference type="EvolutionaryTrace" id="Q9I0Q8"/>
<dbReference type="Proteomes" id="UP000002438">
    <property type="component" value="Chromosome"/>
</dbReference>
<dbReference type="GO" id="GO:0016747">
    <property type="term" value="F:acyltransferase activity, transferring groups other than amino-acyl groups"/>
    <property type="evidence" value="ECO:0000314"/>
    <property type="project" value="UniProtKB"/>
</dbReference>
<dbReference type="CDD" id="cd04301">
    <property type="entry name" value="NAT_SF"/>
    <property type="match status" value="1"/>
</dbReference>
<dbReference type="Gene3D" id="3.40.630.30">
    <property type="match status" value="1"/>
</dbReference>
<dbReference type="InterPro" id="IPR016181">
    <property type="entry name" value="Acyl_CoA_acyltransferase"/>
</dbReference>
<dbReference type="InterPro" id="IPR050832">
    <property type="entry name" value="Bact_Acetyltransf"/>
</dbReference>
<dbReference type="InterPro" id="IPR000182">
    <property type="entry name" value="GNAT_dom"/>
</dbReference>
<dbReference type="PANTHER" id="PTHR43877:SF2">
    <property type="entry name" value="AMINOALKYLPHOSPHONATE N-ACETYLTRANSFERASE-RELATED"/>
    <property type="match status" value="1"/>
</dbReference>
<dbReference type="PANTHER" id="PTHR43877">
    <property type="entry name" value="AMINOALKYLPHOSPHONATE N-ACETYLTRANSFERASE-RELATED-RELATED"/>
    <property type="match status" value="1"/>
</dbReference>
<dbReference type="Pfam" id="PF00583">
    <property type="entry name" value="Acetyltransf_1"/>
    <property type="match status" value="1"/>
</dbReference>
<dbReference type="SUPFAM" id="SSF55729">
    <property type="entry name" value="Acyl-CoA N-acyltransferases (Nat)"/>
    <property type="match status" value="1"/>
</dbReference>
<dbReference type="PROSITE" id="PS51186">
    <property type="entry name" value="GNAT"/>
    <property type="match status" value="1"/>
</dbReference>
<proteinExistence type="evidence at protein level"/>
<name>ATSE2_PSEAE</name>
<keyword id="KW-0002">3D-structure</keyword>
<keyword id="KW-0012">Acyltransferase</keyword>
<keyword id="KW-1185">Reference proteome</keyword>
<keyword id="KW-0808">Transferase</keyword>
<feature type="chain" id="PRO_0000433348" description="Acetyltransferase PA2578">
    <location>
        <begin position="1"/>
        <end position="186"/>
    </location>
</feature>
<feature type="domain" description="N-acetyltransferase" evidence="1">
    <location>
        <begin position="12"/>
        <end position="176"/>
    </location>
</feature>
<feature type="binding site" evidence="3">
    <location>
        <position position="37"/>
    </location>
    <ligand>
        <name>CoA</name>
        <dbReference type="ChEBI" id="CHEBI:57287"/>
    </ligand>
</feature>
<feature type="binding site" evidence="3">
    <location>
        <begin position="97"/>
        <end position="99"/>
    </location>
    <ligand>
        <name>CoA</name>
        <dbReference type="ChEBI" id="CHEBI:57287"/>
    </ligand>
</feature>
<feature type="binding site" evidence="3">
    <location>
        <position position="105"/>
    </location>
    <ligand>
        <name>CoA</name>
        <dbReference type="ChEBI" id="CHEBI:57287"/>
    </ligand>
</feature>
<feature type="binding site" evidence="3">
    <location>
        <position position="137"/>
    </location>
    <ligand>
        <name>CoA</name>
        <dbReference type="ChEBI" id="CHEBI:57287"/>
    </ligand>
</feature>
<feature type="binding site" evidence="3">
    <location>
        <begin position="142"/>
        <end position="144"/>
    </location>
    <ligand>
        <name>CoA</name>
        <dbReference type="ChEBI" id="CHEBI:57287"/>
    </ligand>
</feature>
<feature type="strand" evidence="5">
    <location>
        <begin position="12"/>
        <end position="16"/>
    </location>
</feature>
<feature type="helix" evidence="5">
    <location>
        <begin position="19"/>
        <end position="21"/>
    </location>
</feature>
<feature type="helix" evidence="5">
    <location>
        <begin position="22"/>
        <end position="26"/>
    </location>
</feature>
<feature type="helix" evidence="5">
    <location>
        <begin position="32"/>
        <end position="39"/>
    </location>
</feature>
<feature type="helix" evidence="5">
    <location>
        <begin position="49"/>
        <end position="52"/>
    </location>
</feature>
<feature type="helix" evidence="5">
    <location>
        <begin position="53"/>
        <end position="60"/>
    </location>
</feature>
<feature type="strand" evidence="5">
    <location>
        <begin position="61"/>
        <end position="63"/>
    </location>
</feature>
<feature type="strand" evidence="5">
    <location>
        <begin position="65"/>
        <end position="73"/>
    </location>
</feature>
<feature type="strand" evidence="5">
    <location>
        <begin position="76"/>
        <end position="86"/>
    </location>
</feature>
<feature type="turn" evidence="5">
    <location>
        <begin position="87"/>
        <end position="90"/>
    </location>
</feature>
<feature type="strand" evidence="5">
    <location>
        <begin position="91"/>
        <end position="99"/>
    </location>
</feature>
<feature type="helix" evidence="5">
    <location>
        <begin position="101"/>
        <end position="103"/>
    </location>
</feature>
<feature type="helix" evidence="5">
    <location>
        <begin position="109"/>
        <end position="122"/>
    </location>
</feature>
<feature type="strand" evidence="5">
    <location>
        <begin position="128"/>
        <end position="134"/>
    </location>
</feature>
<feature type="helix" evidence="5">
    <location>
        <begin position="138"/>
        <end position="146"/>
    </location>
</feature>
<feature type="strand" evidence="5">
    <location>
        <begin position="150"/>
        <end position="161"/>
    </location>
</feature>
<feature type="strand" evidence="5">
    <location>
        <begin position="164"/>
        <end position="174"/>
    </location>
</feature>
<feature type="helix" evidence="5">
    <location>
        <begin position="175"/>
        <end position="181"/>
    </location>
</feature>
<comment type="function">
    <text evidence="2">Catalyzes the transfer of an acetyl group from acetyl coenzyme A (AcCoA) to an acceptor substrate and releases both CoA and the acetylated product. It prefers the antibiotic chloramphenicol.</text>
</comment>
<comment type="subunit">
    <text evidence="3">Homodimer.</text>
</comment>
<sequence>MPTPGTGSVPELQLVPFQLGHFPILQRWFATEKELVQWAGPALRHPLSLEQMHEDLAESRRRPPLRLLWSACRDDQVIGHCQLLFDRRNGVVRLARIVLAPSARGQGLGLPMLEALLAEAFADADIERVELNVYDWNAAARHLYRRAGFREEGLRRSATRVGRERWNVVLMGLLRQEWAAGGAGND</sequence>
<evidence type="ECO:0000255" key="1">
    <source>
        <dbReference type="PROSITE-ProRule" id="PRU00532"/>
    </source>
</evidence>
<evidence type="ECO:0000269" key="2">
    <source>
    </source>
</evidence>
<evidence type="ECO:0000269" key="3">
    <source ref="3"/>
</evidence>
<evidence type="ECO:0000303" key="4">
    <source>
    </source>
</evidence>
<evidence type="ECO:0007829" key="5">
    <source>
        <dbReference type="PDB" id="3OWC"/>
    </source>
</evidence>
<organism>
    <name type="scientific">Pseudomonas aeruginosa (strain ATCC 15692 / DSM 22644 / CIP 104116 / JCM 14847 / LMG 12228 / 1C / PRS 101 / PAO1)</name>
    <dbReference type="NCBI Taxonomy" id="208964"/>
    <lineage>
        <taxon>Bacteria</taxon>
        <taxon>Pseudomonadati</taxon>
        <taxon>Pseudomonadota</taxon>
        <taxon>Gammaproteobacteria</taxon>
        <taxon>Pseudomonadales</taxon>
        <taxon>Pseudomonadaceae</taxon>
        <taxon>Pseudomonas</taxon>
    </lineage>
</organism>
<gene>
    <name type="ordered locus">PA2578</name>
</gene>